<dbReference type="EC" id="6.2.1.5" evidence="1"/>
<dbReference type="EMBL" id="CP000875">
    <property type="protein sequence ID" value="ABX07200.1"/>
    <property type="molecule type" value="Genomic_DNA"/>
</dbReference>
<dbReference type="SMR" id="A9B0I2"/>
<dbReference type="FunCoup" id="A9B0I2">
    <property type="interactions" value="485"/>
</dbReference>
<dbReference type="STRING" id="316274.Haur_4569"/>
<dbReference type="KEGG" id="hau:Haur_4569"/>
<dbReference type="eggNOG" id="COG0045">
    <property type="taxonomic scope" value="Bacteria"/>
</dbReference>
<dbReference type="HOGENOM" id="CLU_037430_0_2_0"/>
<dbReference type="InParanoid" id="A9B0I2"/>
<dbReference type="UniPathway" id="UPA00223">
    <property type="reaction ID" value="UER00999"/>
</dbReference>
<dbReference type="Proteomes" id="UP000000787">
    <property type="component" value="Chromosome"/>
</dbReference>
<dbReference type="GO" id="GO:0005829">
    <property type="term" value="C:cytosol"/>
    <property type="evidence" value="ECO:0007669"/>
    <property type="project" value="TreeGrafter"/>
</dbReference>
<dbReference type="GO" id="GO:0042709">
    <property type="term" value="C:succinate-CoA ligase complex"/>
    <property type="evidence" value="ECO:0007669"/>
    <property type="project" value="TreeGrafter"/>
</dbReference>
<dbReference type="GO" id="GO:0005524">
    <property type="term" value="F:ATP binding"/>
    <property type="evidence" value="ECO:0007669"/>
    <property type="project" value="UniProtKB-UniRule"/>
</dbReference>
<dbReference type="GO" id="GO:0000287">
    <property type="term" value="F:magnesium ion binding"/>
    <property type="evidence" value="ECO:0007669"/>
    <property type="project" value="UniProtKB-UniRule"/>
</dbReference>
<dbReference type="GO" id="GO:0004775">
    <property type="term" value="F:succinate-CoA ligase (ADP-forming) activity"/>
    <property type="evidence" value="ECO:0007669"/>
    <property type="project" value="UniProtKB-UniRule"/>
</dbReference>
<dbReference type="GO" id="GO:0004776">
    <property type="term" value="F:succinate-CoA ligase (GDP-forming) activity"/>
    <property type="evidence" value="ECO:0007669"/>
    <property type="project" value="RHEA"/>
</dbReference>
<dbReference type="GO" id="GO:0006104">
    <property type="term" value="P:succinyl-CoA metabolic process"/>
    <property type="evidence" value="ECO:0007669"/>
    <property type="project" value="TreeGrafter"/>
</dbReference>
<dbReference type="GO" id="GO:0006099">
    <property type="term" value="P:tricarboxylic acid cycle"/>
    <property type="evidence" value="ECO:0007669"/>
    <property type="project" value="UniProtKB-UniRule"/>
</dbReference>
<dbReference type="FunFam" id="3.30.1490.20:FF:000014">
    <property type="entry name" value="Succinate--CoA ligase [ADP-forming] subunit beta"/>
    <property type="match status" value="1"/>
</dbReference>
<dbReference type="FunFam" id="3.30.470.20:FF:000002">
    <property type="entry name" value="Succinate--CoA ligase [ADP-forming] subunit beta"/>
    <property type="match status" value="1"/>
</dbReference>
<dbReference type="FunFam" id="3.40.50.261:FF:000001">
    <property type="entry name" value="Succinate--CoA ligase [ADP-forming] subunit beta"/>
    <property type="match status" value="1"/>
</dbReference>
<dbReference type="Gene3D" id="3.30.1490.20">
    <property type="entry name" value="ATP-grasp fold, A domain"/>
    <property type="match status" value="1"/>
</dbReference>
<dbReference type="Gene3D" id="3.30.470.20">
    <property type="entry name" value="ATP-grasp fold, B domain"/>
    <property type="match status" value="1"/>
</dbReference>
<dbReference type="Gene3D" id="3.40.50.261">
    <property type="entry name" value="Succinyl-CoA synthetase domains"/>
    <property type="match status" value="1"/>
</dbReference>
<dbReference type="HAMAP" id="MF_00558">
    <property type="entry name" value="Succ_CoA_beta"/>
    <property type="match status" value="1"/>
</dbReference>
<dbReference type="InterPro" id="IPR011761">
    <property type="entry name" value="ATP-grasp"/>
</dbReference>
<dbReference type="InterPro" id="IPR013650">
    <property type="entry name" value="ATP-grasp_succ-CoA_synth-type"/>
</dbReference>
<dbReference type="InterPro" id="IPR013815">
    <property type="entry name" value="ATP_grasp_subdomain_1"/>
</dbReference>
<dbReference type="InterPro" id="IPR017866">
    <property type="entry name" value="Succ-CoA_synthase_bsu_CS"/>
</dbReference>
<dbReference type="InterPro" id="IPR005811">
    <property type="entry name" value="SUCC_ACL_C"/>
</dbReference>
<dbReference type="InterPro" id="IPR005809">
    <property type="entry name" value="Succ_CoA_ligase-like_bsu"/>
</dbReference>
<dbReference type="InterPro" id="IPR016102">
    <property type="entry name" value="Succinyl-CoA_synth-like"/>
</dbReference>
<dbReference type="NCBIfam" id="NF001913">
    <property type="entry name" value="PRK00696.1"/>
    <property type="match status" value="1"/>
</dbReference>
<dbReference type="NCBIfam" id="TIGR01016">
    <property type="entry name" value="sucCoAbeta"/>
    <property type="match status" value="1"/>
</dbReference>
<dbReference type="PANTHER" id="PTHR11815:SF10">
    <property type="entry name" value="SUCCINATE--COA LIGASE [GDP-FORMING] SUBUNIT BETA, MITOCHONDRIAL"/>
    <property type="match status" value="1"/>
</dbReference>
<dbReference type="PANTHER" id="PTHR11815">
    <property type="entry name" value="SUCCINYL-COA SYNTHETASE BETA CHAIN"/>
    <property type="match status" value="1"/>
</dbReference>
<dbReference type="Pfam" id="PF08442">
    <property type="entry name" value="ATP-grasp_2"/>
    <property type="match status" value="1"/>
</dbReference>
<dbReference type="Pfam" id="PF00549">
    <property type="entry name" value="Ligase_CoA"/>
    <property type="match status" value="1"/>
</dbReference>
<dbReference type="PIRSF" id="PIRSF001554">
    <property type="entry name" value="SucCS_beta"/>
    <property type="match status" value="1"/>
</dbReference>
<dbReference type="SUPFAM" id="SSF56059">
    <property type="entry name" value="Glutathione synthetase ATP-binding domain-like"/>
    <property type="match status" value="1"/>
</dbReference>
<dbReference type="SUPFAM" id="SSF52210">
    <property type="entry name" value="Succinyl-CoA synthetase domains"/>
    <property type="match status" value="1"/>
</dbReference>
<dbReference type="PROSITE" id="PS50975">
    <property type="entry name" value="ATP_GRASP"/>
    <property type="match status" value="1"/>
</dbReference>
<dbReference type="PROSITE" id="PS01217">
    <property type="entry name" value="SUCCINYL_COA_LIG_3"/>
    <property type="match status" value="1"/>
</dbReference>
<keyword id="KW-0067">ATP-binding</keyword>
<keyword id="KW-0436">Ligase</keyword>
<keyword id="KW-0460">Magnesium</keyword>
<keyword id="KW-0479">Metal-binding</keyword>
<keyword id="KW-0547">Nucleotide-binding</keyword>
<keyword id="KW-0816">Tricarboxylic acid cycle</keyword>
<evidence type="ECO:0000255" key="1">
    <source>
        <dbReference type="HAMAP-Rule" id="MF_00558"/>
    </source>
</evidence>
<accession>A9B0I2</accession>
<feature type="chain" id="PRO_1000129195" description="Succinate--CoA ligase [ADP-forming] subunit beta">
    <location>
        <begin position="1"/>
        <end position="378"/>
    </location>
</feature>
<feature type="domain" description="ATP-grasp" evidence="1">
    <location>
        <begin position="9"/>
        <end position="237"/>
    </location>
</feature>
<feature type="binding site" evidence="1">
    <location>
        <position position="45"/>
    </location>
    <ligand>
        <name>ATP</name>
        <dbReference type="ChEBI" id="CHEBI:30616"/>
    </ligand>
</feature>
<feature type="binding site" evidence="1">
    <location>
        <begin position="52"/>
        <end position="54"/>
    </location>
    <ligand>
        <name>ATP</name>
        <dbReference type="ChEBI" id="CHEBI:30616"/>
    </ligand>
</feature>
<feature type="binding site" evidence="1">
    <location>
        <position position="94"/>
    </location>
    <ligand>
        <name>ATP</name>
        <dbReference type="ChEBI" id="CHEBI:30616"/>
    </ligand>
</feature>
<feature type="binding site" evidence="1">
    <location>
        <position position="99"/>
    </location>
    <ligand>
        <name>ATP</name>
        <dbReference type="ChEBI" id="CHEBI:30616"/>
    </ligand>
</feature>
<feature type="binding site" evidence="1">
    <location>
        <position position="192"/>
    </location>
    <ligand>
        <name>Mg(2+)</name>
        <dbReference type="ChEBI" id="CHEBI:18420"/>
    </ligand>
</feature>
<feature type="binding site" evidence="1">
    <location>
        <position position="206"/>
    </location>
    <ligand>
        <name>Mg(2+)</name>
        <dbReference type="ChEBI" id="CHEBI:18420"/>
    </ligand>
</feature>
<feature type="binding site" evidence="1">
    <location>
        <position position="257"/>
    </location>
    <ligand>
        <name>substrate</name>
        <note>ligand shared with subunit alpha</note>
    </ligand>
</feature>
<feature type="binding site" evidence="1">
    <location>
        <begin position="314"/>
        <end position="316"/>
    </location>
    <ligand>
        <name>substrate</name>
        <note>ligand shared with subunit alpha</note>
    </ligand>
</feature>
<comment type="function">
    <text evidence="1">Succinyl-CoA synthetase functions in the citric acid cycle (TCA), coupling the hydrolysis of succinyl-CoA to the synthesis of either ATP or GTP and thus represents the only step of substrate-level phosphorylation in the TCA. The beta subunit provides nucleotide specificity of the enzyme and binds the substrate succinate, while the binding sites for coenzyme A and phosphate are found in the alpha subunit.</text>
</comment>
<comment type="catalytic activity">
    <reaction evidence="1">
        <text>succinate + ATP + CoA = succinyl-CoA + ADP + phosphate</text>
        <dbReference type="Rhea" id="RHEA:17661"/>
        <dbReference type="ChEBI" id="CHEBI:30031"/>
        <dbReference type="ChEBI" id="CHEBI:30616"/>
        <dbReference type="ChEBI" id="CHEBI:43474"/>
        <dbReference type="ChEBI" id="CHEBI:57287"/>
        <dbReference type="ChEBI" id="CHEBI:57292"/>
        <dbReference type="ChEBI" id="CHEBI:456216"/>
        <dbReference type="EC" id="6.2.1.5"/>
    </reaction>
    <physiologicalReaction direction="right-to-left" evidence="1">
        <dbReference type="Rhea" id="RHEA:17663"/>
    </physiologicalReaction>
</comment>
<comment type="catalytic activity">
    <reaction evidence="1">
        <text>GTP + succinate + CoA = succinyl-CoA + GDP + phosphate</text>
        <dbReference type="Rhea" id="RHEA:22120"/>
        <dbReference type="ChEBI" id="CHEBI:30031"/>
        <dbReference type="ChEBI" id="CHEBI:37565"/>
        <dbReference type="ChEBI" id="CHEBI:43474"/>
        <dbReference type="ChEBI" id="CHEBI:57287"/>
        <dbReference type="ChEBI" id="CHEBI:57292"/>
        <dbReference type="ChEBI" id="CHEBI:58189"/>
    </reaction>
    <physiologicalReaction direction="right-to-left" evidence="1">
        <dbReference type="Rhea" id="RHEA:22122"/>
    </physiologicalReaction>
</comment>
<comment type="cofactor">
    <cofactor evidence="1">
        <name>Mg(2+)</name>
        <dbReference type="ChEBI" id="CHEBI:18420"/>
    </cofactor>
    <text evidence="1">Binds 1 Mg(2+) ion per subunit.</text>
</comment>
<comment type="pathway">
    <text evidence="1">Carbohydrate metabolism; tricarboxylic acid cycle; succinate from succinyl-CoA (ligase route): step 1/1.</text>
</comment>
<comment type="subunit">
    <text evidence="1">Heterotetramer of two alpha and two beta subunits.</text>
</comment>
<comment type="similarity">
    <text evidence="1">Belongs to the succinate/malate CoA ligase beta subunit family.</text>
</comment>
<gene>
    <name evidence="1" type="primary">sucC</name>
    <name type="ordered locus">Haur_4569</name>
</gene>
<organism>
    <name type="scientific">Herpetosiphon aurantiacus (strain ATCC 23779 / DSM 785 / 114-95)</name>
    <dbReference type="NCBI Taxonomy" id="316274"/>
    <lineage>
        <taxon>Bacteria</taxon>
        <taxon>Bacillati</taxon>
        <taxon>Chloroflexota</taxon>
        <taxon>Chloroflexia</taxon>
        <taxon>Herpetosiphonales</taxon>
        <taxon>Herpetosiphonaceae</taxon>
        <taxon>Herpetosiphon</taxon>
    </lineage>
</organism>
<proteinExistence type="inferred from homology"/>
<reference key="1">
    <citation type="journal article" date="2011" name="Stand. Genomic Sci.">
        <title>Complete genome sequence of the filamentous gliding predatory bacterium Herpetosiphon aurantiacus type strain (114-95(T)).</title>
        <authorList>
            <person name="Kiss H."/>
            <person name="Nett M."/>
            <person name="Domin N."/>
            <person name="Martin K."/>
            <person name="Maresca J.A."/>
            <person name="Copeland A."/>
            <person name="Lapidus A."/>
            <person name="Lucas S."/>
            <person name="Berry K.W."/>
            <person name="Glavina Del Rio T."/>
            <person name="Dalin E."/>
            <person name="Tice H."/>
            <person name="Pitluck S."/>
            <person name="Richardson P."/>
            <person name="Bruce D."/>
            <person name="Goodwin L."/>
            <person name="Han C."/>
            <person name="Detter J.C."/>
            <person name="Schmutz J."/>
            <person name="Brettin T."/>
            <person name="Land M."/>
            <person name="Hauser L."/>
            <person name="Kyrpides N.C."/>
            <person name="Ivanova N."/>
            <person name="Goeker M."/>
            <person name="Woyke T."/>
            <person name="Klenk H.P."/>
            <person name="Bryant D.A."/>
        </authorList>
    </citation>
    <scope>NUCLEOTIDE SEQUENCE [LARGE SCALE GENOMIC DNA]</scope>
    <source>
        <strain>ATCC 23779 / DSM 785 / 114-95</strain>
    </source>
</reference>
<sequence length="378" mass="39640">MKLHEYQARDIVARYGIPVTGGGVAATAEEVQKVAEQIGGPVAVKAQVHVGGRGKAGGIKLANTPAEAFDAGKAILGMDIKGLTVEKVLVAEAITFEKEIYLGVILDRATKRVVLIASSEGGVEIEEVAKINPDAIIKLAADPLLGLQPYQAQELAYSIGITDAKQARQFSSIATGLYRAFVENDAELAEINPLVVLPNGQLQALDSKIVLDDSGLFRHSEVAGMRDIAGEPESEIKARENGLTFIKLDGNIGCMVNGAGLAMATMDVVNLFGGEPANFLDIGGGANAQKVAAALDIILDDPNVKVVMVNIFGGITRCDEVAKGIVEAQKIIKRQVPMVVRLVGTNEAEGQRILADASLTPASTLADAAQKAVDIAKQ</sequence>
<name>SUCC_HERA2</name>
<protein>
    <recommendedName>
        <fullName evidence="1">Succinate--CoA ligase [ADP-forming] subunit beta</fullName>
        <ecNumber evidence="1">6.2.1.5</ecNumber>
    </recommendedName>
    <alternativeName>
        <fullName evidence="1">Succinyl-CoA synthetase subunit beta</fullName>
        <shortName evidence="1">SCS-beta</shortName>
    </alternativeName>
</protein>